<name>COX1_BLAGE</name>
<evidence type="ECO:0000250" key="1"/>
<evidence type="ECO:0000250" key="2">
    <source>
        <dbReference type="UniProtKB" id="P00396"/>
    </source>
</evidence>
<evidence type="ECO:0000250" key="3">
    <source>
        <dbReference type="UniProtKB" id="P00401"/>
    </source>
</evidence>
<evidence type="ECO:0000269" key="4">
    <source>
    </source>
</evidence>
<evidence type="ECO:0000305" key="5"/>
<evidence type="ECO:0000312" key="6">
    <source>
        <dbReference type="EMBL" id="AAB31450.2"/>
    </source>
</evidence>
<accession>Q36724</accession>
<feature type="chain" id="PRO_0000183295" description="Cytochrome c oxidase subunit 1">
    <location>
        <begin position="1" status="less than"/>
        <end position="508"/>
    </location>
</feature>
<feature type="topological domain" description="Mitochondrial matrix" evidence="1">
    <location>
        <begin position="1" status="less than"/>
        <end position="6"/>
    </location>
</feature>
<feature type="transmembrane region" description="Helical; Name=I" evidence="1">
    <location>
        <begin position="7"/>
        <end position="35"/>
    </location>
</feature>
<feature type="topological domain" description="Mitochondrial intermembrane" evidence="1">
    <location>
        <begin position="36"/>
        <end position="45"/>
    </location>
</feature>
<feature type="transmembrane region" description="Helical; Name=II" evidence="1">
    <location>
        <begin position="46"/>
        <end position="81"/>
    </location>
</feature>
<feature type="topological domain" description="Mitochondrial matrix" evidence="1">
    <location>
        <begin position="82"/>
        <end position="89"/>
    </location>
</feature>
<feature type="transmembrane region" description="Helical; Name=III" evidence="1">
    <location>
        <begin position="90"/>
        <end position="112"/>
    </location>
</feature>
<feature type="topological domain" description="Mitochondrial intermembrane" evidence="1">
    <location>
        <begin position="113"/>
        <end position="135"/>
    </location>
</feature>
<feature type="transmembrane region" description="Helical; Name=IV" evidence="1">
    <location>
        <begin position="136"/>
        <end position="165"/>
    </location>
</feature>
<feature type="topological domain" description="Mitochondrial matrix" evidence="1">
    <location>
        <begin position="166"/>
        <end position="177"/>
    </location>
</feature>
<feature type="transmembrane region" description="Helical; Name=V" evidence="1">
    <location>
        <begin position="178"/>
        <end position="207"/>
    </location>
</feature>
<feature type="topological domain" description="Mitochondrial intermembrane" evidence="1">
    <location>
        <begin position="208"/>
        <end position="222"/>
    </location>
</feature>
<feature type="transmembrane region" description="Helical; Name=VI" evidence="1">
    <location>
        <begin position="223"/>
        <end position="256"/>
    </location>
</feature>
<feature type="topological domain" description="Mitochondrial matrix" evidence="1">
    <location>
        <begin position="257"/>
        <end position="264"/>
    </location>
</feature>
<feature type="transmembrane region" description="Helical; Name=VII" evidence="1">
    <location>
        <begin position="265"/>
        <end position="281"/>
    </location>
</feature>
<feature type="topological domain" description="Mitochondrial intermembrane" evidence="1">
    <location>
        <begin position="282"/>
        <end position="293"/>
    </location>
</feature>
<feature type="transmembrane region" description="Helical; Name=VIII" evidence="1">
    <location>
        <begin position="294"/>
        <end position="322"/>
    </location>
</feature>
<feature type="topological domain" description="Mitochondrial matrix" evidence="1">
    <location>
        <begin position="323"/>
        <end position="330"/>
    </location>
</feature>
<feature type="transmembrane region" description="Helical; Name=IX" evidence="1">
    <location>
        <begin position="331"/>
        <end position="352"/>
    </location>
</feature>
<feature type="topological domain" description="Mitochondrial intermembrane" evidence="1">
    <location>
        <begin position="353"/>
        <end position="365"/>
    </location>
</feature>
<feature type="transmembrane region" description="Helical; Name=X" evidence="1">
    <location>
        <begin position="366"/>
        <end position="395"/>
    </location>
</feature>
<feature type="topological domain" description="Mitochondrial matrix" evidence="1">
    <location>
        <begin position="396"/>
        <end position="401"/>
    </location>
</feature>
<feature type="transmembrane region" description="Helical; Name=XI" evidence="1">
    <location>
        <begin position="402"/>
        <end position="428"/>
    </location>
</feature>
<feature type="topological domain" description="Mitochondrial intermembrane" evidence="1">
    <location>
        <begin position="429"/>
        <end position="441"/>
    </location>
</feature>
<feature type="transmembrane region" description="Helical; Name=XII" evidence="1">
    <location>
        <begin position="442"/>
        <end position="473"/>
    </location>
</feature>
<feature type="topological domain" description="Mitochondrial matrix" evidence="1">
    <location>
        <begin position="474"/>
        <end position="508"/>
    </location>
</feature>
<feature type="binding site" evidence="3">
    <location>
        <position position="35"/>
    </location>
    <ligand>
        <name>Ca(2+)</name>
        <dbReference type="ChEBI" id="CHEBI:29108"/>
    </ligand>
</feature>
<feature type="binding site" evidence="3">
    <location>
        <position position="40"/>
    </location>
    <ligand>
        <name>Ca(2+)</name>
        <dbReference type="ChEBI" id="CHEBI:29108"/>
    </ligand>
</feature>
<feature type="binding site" description="axial binding residue" evidence="3">
    <location>
        <position position="56"/>
    </location>
    <ligand>
        <name>Fe(II)-heme a</name>
        <dbReference type="ChEBI" id="CHEBI:61715"/>
        <note>low-spin</note>
    </ligand>
    <ligandPart>
        <name>Fe</name>
        <dbReference type="ChEBI" id="CHEBI:18248"/>
    </ligandPart>
</feature>
<feature type="binding site" evidence="3">
    <location>
        <position position="235"/>
    </location>
    <ligand>
        <name>Cu cation</name>
        <dbReference type="ChEBI" id="CHEBI:23378"/>
        <label>B</label>
    </ligand>
</feature>
<feature type="binding site" evidence="2">
    <location>
        <position position="239"/>
    </location>
    <ligand>
        <name>O2</name>
        <dbReference type="ChEBI" id="CHEBI:15379"/>
    </ligand>
</feature>
<feature type="binding site" evidence="3">
    <location>
        <position position="285"/>
    </location>
    <ligand>
        <name>Cu cation</name>
        <dbReference type="ChEBI" id="CHEBI:23378"/>
        <label>B</label>
    </ligand>
</feature>
<feature type="binding site" evidence="3">
    <location>
        <position position="286"/>
    </location>
    <ligand>
        <name>Cu cation</name>
        <dbReference type="ChEBI" id="CHEBI:23378"/>
        <label>B</label>
    </ligand>
</feature>
<feature type="binding site" evidence="3">
    <location>
        <position position="363"/>
    </location>
    <ligand>
        <name>Mg(2+)</name>
        <dbReference type="ChEBI" id="CHEBI:18420"/>
        <note>ligand shared with subunit 2</note>
    </ligand>
</feature>
<feature type="binding site" evidence="3">
    <location>
        <position position="364"/>
    </location>
    <ligand>
        <name>Mg(2+)</name>
        <dbReference type="ChEBI" id="CHEBI:18420"/>
        <note>ligand shared with subunit 2</note>
    </ligand>
</feature>
<feature type="binding site" description="axial binding residue" evidence="3">
    <location>
        <position position="371"/>
    </location>
    <ligand>
        <name>heme a3</name>
        <dbReference type="ChEBI" id="CHEBI:83282"/>
        <note>high-spin</note>
    </ligand>
    <ligandPart>
        <name>Fe</name>
        <dbReference type="ChEBI" id="CHEBI:18248"/>
    </ligandPart>
</feature>
<feature type="binding site" description="axial binding residue" evidence="3">
    <location>
        <position position="373"/>
    </location>
    <ligand>
        <name>Fe(II)-heme a</name>
        <dbReference type="ChEBI" id="CHEBI:61715"/>
        <note>low-spin</note>
    </ligand>
    <ligandPart>
        <name>Fe</name>
        <dbReference type="ChEBI" id="CHEBI:18248"/>
    </ligandPart>
</feature>
<feature type="cross-link" description="1'-histidyl-3'-tyrosine (His-Tyr)" evidence="3">
    <location>
        <begin position="235"/>
        <end position="239"/>
    </location>
</feature>
<feature type="non-terminal residue" evidence="6">
    <location>
        <position position="1"/>
    </location>
</feature>
<geneLocation type="mitochondrion" evidence="6"/>
<sequence>WLFSTNHKDIGTLYFIFGAWSGMVGMSLSMLIRAELNQPGSLIGDDQIYNVIVTAHAFVMIFFMVMPILIGGFGNWLVPLMLGAPDMAFPRMNNMSFWFLPPSLSLLLASSLVESGAGTGWTLYPPLASGIAHAGASVDLAIFSLHLAGVSSILGAVNFISTIINMKPINMSPERIPLFVWSVGITALLLLLSLPVLAGAITMLLTDRNLNTSFFDPAGGGDPILYQHLFWFFGHPEVYILILPGFGMISHIICHESGKKEAFGNLGMIFAMLAIGLLGFVVWAHHMFTVGMDVDTRAYFTSATMIIAVPTGIKIFSWLATMYGSQLTYSAPCLWALGFVFLFTVGGLTGVVLANSSIDIVLHDTYYVVAHFHYVLSMGAVFAIMAGFIQWYPLFTGLSLNPKWLKIQFSIMFLGVNLTFFPQHFLGLAGMPRRYSDYPDAYTAWNVISSIGSMISFVAVLMFIFIMWESMSSNRQVLFPTQTSNSIEWFQNIPPAEHSYAELPTISY</sequence>
<protein>
    <recommendedName>
        <fullName>Cytochrome c oxidase subunit 1</fullName>
        <ecNumber>7.1.1.9</ecNumber>
    </recommendedName>
    <alternativeName>
        <fullName>Cytochrome c oxidase polypeptide I</fullName>
    </alternativeName>
</protein>
<gene>
    <name type="primary">COI</name>
</gene>
<reference evidence="5 6" key="1">
    <citation type="journal article" date="1994" name="Insect Biochem. Mol. Biol.">
        <title>Cytochrome c oxidase subunit I from the cockroach Blattella germanica: cloning, developmental pattern and tissue expression.</title>
        <authorList>
            <person name="Martinez-Gonzalez J."/>
            <person name="Hegardt F.G."/>
        </authorList>
    </citation>
    <scope>NUCLEOTIDE SEQUENCE [MRNA]</scope>
    <scope>DEVELOPMENTAL STAGE</scope>
    <scope>TISSUE SPECIFICITY</scope>
</reference>
<keyword id="KW-0106">Calcium</keyword>
<keyword id="KW-0186">Copper</keyword>
<keyword id="KW-0249">Electron transport</keyword>
<keyword id="KW-0349">Heme</keyword>
<keyword id="KW-0408">Iron</keyword>
<keyword id="KW-0460">Magnesium</keyword>
<keyword id="KW-0472">Membrane</keyword>
<keyword id="KW-0479">Metal-binding</keyword>
<keyword id="KW-0496">Mitochondrion</keyword>
<keyword id="KW-0999">Mitochondrion inner membrane</keyword>
<keyword id="KW-0679">Respiratory chain</keyword>
<keyword id="KW-1278">Translocase</keyword>
<keyword id="KW-0812">Transmembrane</keyword>
<keyword id="KW-1133">Transmembrane helix</keyword>
<keyword id="KW-0813">Transport</keyword>
<dbReference type="EC" id="7.1.1.9"/>
<dbReference type="EMBL" id="S72627">
    <property type="protein sequence ID" value="AAB31450.2"/>
    <property type="molecule type" value="mRNA"/>
</dbReference>
<dbReference type="SMR" id="Q36724"/>
<dbReference type="UniPathway" id="UPA00705"/>
<dbReference type="GO" id="GO:0005743">
    <property type="term" value="C:mitochondrial inner membrane"/>
    <property type="evidence" value="ECO:0000303"/>
    <property type="project" value="UniProtKB"/>
</dbReference>
<dbReference type="GO" id="GO:0045277">
    <property type="term" value="C:respiratory chain complex IV"/>
    <property type="evidence" value="ECO:0007669"/>
    <property type="project" value="InterPro"/>
</dbReference>
<dbReference type="GO" id="GO:0004129">
    <property type="term" value="F:cytochrome-c oxidase activity"/>
    <property type="evidence" value="ECO:0000303"/>
    <property type="project" value="UniProtKB"/>
</dbReference>
<dbReference type="GO" id="GO:0020037">
    <property type="term" value="F:heme binding"/>
    <property type="evidence" value="ECO:0007669"/>
    <property type="project" value="InterPro"/>
</dbReference>
<dbReference type="GO" id="GO:0046872">
    <property type="term" value="F:metal ion binding"/>
    <property type="evidence" value="ECO:0007669"/>
    <property type="project" value="UniProtKB-KW"/>
</dbReference>
<dbReference type="GO" id="GO:0015990">
    <property type="term" value="P:electron transport coupled proton transport"/>
    <property type="evidence" value="ECO:0007669"/>
    <property type="project" value="TreeGrafter"/>
</dbReference>
<dbReference type="GO" id="GO:0006123">
    <property type="term" value="P:mitochondrial electron transport, cytochrome c to oxygen"/>
    <property type="evidence" value="ECO:0007669"/>
    <property type="project" value="TreeGrafter"/>
</dbReference>
<dbReference type="CDD" id="cd01663">
    <property type="entry name" value="Cyt_c_Oxidase_I"/>
    <property type="match status" value="1"/>
</dbReference>
<dbReference type="FunFam" id="1.20.210.10:FF:000001">
    <property type="entry name" value="Cytochrome c oxidase subunit 1"/>
    <property type="match status" value="1"/>
</dbReference>
<dbReference type="Gene3D" id="1.20.210.10">
    <property type="entry name" value="Cytochrome c oxidase-like, subunit I domain"/>
    <property type="match status" value="1"/>
</dbReference>
<dbReference type="InterPro" id="IPR023616">
    <property type="entry name" value="Cyt_c_oxase-like_su1_dom"/>
</dbReference>
<dbReference type="InterPro" id="IPR036927">
    <property type="entry name" value="Cyt_c_oxase-like_su1_sf"/>
</dbReference>
<dbReference type="InterPro" id="IPR000883">
    <property type="entry name" value="Cyt_C_Oxase_1"/>
</dbReference>
<dbReference type="InterPro" id="IPR023615">
    <property type="entry name" value="Cyt_c_Oxase_su1_BS"/>
</dbReference>
<dbReference type="InterPro" id="IPR033944">
    <property type="entry name" value="Cyt_c_oxase_su1_dom"/>
</dbReference>
<dbReference type="PANTHER" id="PTHR10422">
    <property type="entry name" value="CYTOCHROME C OXIDASE SUBUNIT 1"/>
    <property type="match status" value="1"/>
</dbReference>
<dbReference type="PANTHER" id="PTHR10422:SF18">
    <property type="entry name" value="CYTOCHROME C OXIDASE SUBUNIT 1"/>
    <property type="match status" value="1"/>
</dbReference>
<dbReference type="Pfam" id="PF00115">
    <property type="entry name" value="COX1"/>
    <property type="match status" value="1"/>
</dbReference>
<dbReference type="PRINTS" id="PR01165">
    <property type="entry name" value="CYCOXIDASEI"/>
</dbReference>
<dbReference type="SUPFAM" id="SSF81442">
    <property type="entry name" value="Cytochrome c oxidase subunit I-like"/>
    <property type="match status" value="1"/>
</dbReference>
<dbReference type="PROSITE" id="PS50855">
    <property type="entry name" value="COX1"/>
    <property type="match status" value="1"/>
</dbReference>
<dbReference type="PROSITE" id="PS00077">
    <property type="entry name" value="COX1_CUB"/>
    <property type="match status" value="1"/>
</dbReference>
<comment type="function">
    <text evidence="3">Component of the cytochrome c oxidase, the last enzyme in the mitochondrial electron transport chain which drives oxidative phosphorylation. The respiratory chain contains 3 multisubunit complexes succinate dehydrogenase (complex II, CII), ubiquinol-cytochrome c oxidoreductase (cytochrome b-c1 complex, complex III, CIII) and cytochrome c oxidase (complex IV, CIV), that cooperate to transfer electrons derived from NADH and succinate to molecular oxygen, creating an electrochemical gradient over the inner membrane that drives transmembrane transport and the ATP synthase. Cytochrome c oxidase is the component of the respiratory chain that catalyzes the reduction of oxygen to water. Electrons originating from reduced cytochrome c in the intermembrane space (IMS) are transferred via the dinuclear copper A center (CU(A)) of subunit 2 and heme A of subunit 1 to the active site in subunit 1, a binuclear center (BNC) formed by heme A3 and copper B (CU(B)). The BNC reduces molecular oxygen to 2 water molecules using 4 electrons from cytochrome c in the IMS and 4 protons from the mitochondrial matrix.</text>
</comment>
<comment type="catalytic activity">
    <reaction evidence="3">
        <text>4 Fe(II)-[cytochrome c] + O2 + 8 H(+)(in) = 4 Fe(III)-[cytochrome c] + 2 H2O + 4 H(+)(out)</text>
        <dbReference type="Rhea" id="RHEA:11436"/>
        <dbReference type="Rhea" id="RHEA-COMP:10350"/>
        <dbReference type="Rhea" id="RHEA-COMP:14399"/>
        <dbReference type="ChEBI" id="CHEBI:15377"/>
        <dbReference type="ChEBI" id="CHEBI:15378"/>
        <dbReference type="ChEBI" id="CHEBI:15379"/>
        <dbReference type="ChEBI" id="CHEBI:29033"/>
        <dbReference type="ChEBI" id="CHEBI:29034"/>
        <dbReference type="EC" id="7.1.1.9"/>
    </reaction>
    <physiologicalReaction direction="left-to-right" evidence="3">
        <dbReference type="Rhea" id="RHEA:11437"/>
    </physiologicalReaction>
</comment>
<comment type="cofactor">
    <cofactor evidence="3">
        <name>heme</name>
        <dbReference type="ChEBI" id="CHEBI:30413"/>
    </cofactor>
    <text evidence="3">Binds 2 heme A groups non-covalently per subunit.</text>
</comment>
<comment type="cofactor">
    <cofactor evidence="3">
        <name>Cu cation</name>
        <dbReference type="ChEBI" id="CHEBI:23378"/>
    </cofactor>
    <text evidence="3">Binds a copper B center.</text>
</comment>
<comment type="pathway">
    <text evidence="3">Energy metabolism; oxidative phosphorylation.</text>
</comment>
<comment type="subunit">
    <text evidence="3">Component of the cytochrome c oxidase (complex IV, CIV), a multisubunit enzyme composed of a catalytic core of 3 subunits and several supernumerary subunits. The complex exists as a monomer or a dimer and forms supercomplexes (SCs) in the inner mitochondrial membrane with ubiquinol-cytochrome c oxidoreductase (cytochrome b-c1 complex, complex III, CIII).</text>
</comment>
<comment type="subcellular location">
    <subcellularLocation>
        <location evidence="3">Mitochondrion inner membrane</location>
        <topology evidence="3">Multi-pass membrane protein</topology>
    </subcellularLocation>
</comment>
<comment type="tissue specificity">
    <text evidence="4">Expressed in all tissues examined. Highest levels in gut and fat body, lower levels in ovary and collateral glands.</text>
</comment>
<comment type="developmental stage">
    <text evidence="4">Levels increase 3-fold during embryo development with the highest level in 17 day old embryos. Relatively low levels in larvae and adults.</text>
</comment>
<comment type="similarity">
    <text evidence="5">Belongs to the heme-copper respiratory oxidase family.</text>
</comment>
<proteinExistence type="evidence at transcript level"/>
<organism evidence="6">
    <name type="scientific">Blattella germanica</name>
    <name type="common">German cockroach</name>
    <name type="synonym">Blatta germanica</name>
    <dbReference type="NCBI Taxonomy" id="6973"/>
    <lineage>
        <taxon>Eukaryota</taxon>
        <taxon>Metazoa</taxon>
        <taxon>Ecdysozoa</taxon>
        <taxon>Arthropoda</taxon>
        <taxon>Hexapoda</taxon>
        <taxon>Insecta</taxon>
        <taxon>Pterygota</taxon>
        <taxon>Neoptera</taxon>
        <taxon>Polyneoptera</taxon>
        <taxon>Dictyoptera</taxon>
        <taxon>Blattodea</taxon>
        <taxon>Blaberoidea</taxon>
        <taxon>Blattellidae</taxon>
        <taxon>Blattella</taxon>
    </lineage>
</organism>